<dbReference type="EC" id="3.1.26.4" evidence="1"/>
<dbReference type="EMBL" id="CP000388">
    <property type="protein sequence ID" value="ABG40881.1"/>
    <property type="molecule type" value="Genomic_DNA"/>
</dbReference>
<dbReference type="RefSeq" id="WP_011575162.1">
    <property type="nucleotide sequence ID" value="NC_008228.1"/>
</dbReference>
<dbReference type="SMR" id="Q15TA7"/>
<dbReference type="STRING" id="342610.Patl_2365"/>
<dbReference type="KEGG" id="pat:Patl_2365"/>
<dbReference type="eggNOG" id="COG0328">
    <property type="taxonomic scope" value="Bacteria"/>
</dbReference>
<dbReference type="HOGENOM" id="CLU_030894_6_0_6"/>
<dbReference type="OrthoDB" id="7845843at2"/>
<dbReference type="Proteomes" id="UP000001981">
    <property type="component" value="Chromosome"/>
</dbReference>
<dbReference type="GO" id="GO:0005737">
    <property type="term" value="C:cytoplasm"/>
    <property type="evidence" value="ECO:0007669"/>
    <property type="project" value="UniProtKB-SubCell"/>
</dbReference>
<dbReference type="GO" id="GO:0000287">
    <property type="term" value="F:magnesium ion binding"/>
    <property type="evidence" value="ECO:0007669"/>
    <property type="project" value="UniProtKB-UniRule"/>
</dbReference>
<dbReference type="GO" id="GO:0003676">
    <property type="term" value="F:nucleic acid binding"/>
    <property type="evidence" value="ECO:0007669"/>
    <property type="project" value="InterPro"/>
</dbReference>
<dbReference type="GO" id="GO:0004523">
    <property type="term" value="F:RNA-DNA hybrid ribonuclease activity"/>
    <property type="evidence" value="ECO:0007669"/>
    <property type="project" value="UniProtKB-UniRule"/>
</dbReference>
<dbReference type="GO" id="GO:0043137">
    <property type="term" value="P:DNA replication, removal of RNA primer"/>
    <property type="evidence" value="ECO:0007669"/>
    <property type="project" value="TreeGrafter"/>
</dbReference>
<dbReference type="CDD" id="cd09278">
    <property type="entry name" value="RNase_HI_prokaryote_like"/>
    <property type="match status" value="1"/>
</dbReference>
<dbReference type="FunFam" id="3.30.420.10:FF:000008">
    <property type="entry name" value="Ribonuclease H"/>
    <property type="match status" value="1"/>
</dbReference>
<dbReference type="Gene3D" id="3.30.420.10">
    <property type="entry name" value="Ribonuclease H-like superfamily/Ribonuclease H"/>
    <property type="match status" value="1"/>
</dbReference>
<dbReference type="HAMAP" id="MF_00042">
    <property type="entry name" value="RNase_H"/>
    <property type="match status" value="1"/>
</dbReference>
<dbReference type="InterPro" id="IPR050092">
    <property type="entry name" value="RNase_H"/>
</dbReference>
<dbReference type="InterPro" id="IPR012337">
    <property type="entry name" value="RNaseH-like_sf"/>
</dbReference>
<dbReference type="InterPro" id="IPR002156">
    <property type="entry name" value="RNaseH_domain"/>
</dbReference>
<dbReference type="InterPro" id="IPR036397">
    <property type="entry name" value="RNaseH_sf"/>
</dbReference>
<dbReference type="InterPro" id="IPR022892">
    <property type="entry name" value="RNaseHI"/>
</dbReference>
<dbReference type="NCBIfam" id="NF001236">
    <property type="entry name" value="PRK00203.1"/>
    <property type="match status" value="1"/>
</dbReference>
<dbReference type="PANTHER" id="PTHR10642">
    <property type="entry name" value="RIBONUCLEASE H1"/>
    <property type="match status" value="1"/>
</dbReference>
<dbReference type="PANTHER" id="PTHR10642:SF26">
    <property type="entry name" value="RIBONUCLEASE H1"/>
    <property type="match status" value="1"/>
</dbReference>
<dbReference type="Pfam" id="PF00075">
    <property type="entry name" value="RNase_H"/>
    <property type="match status" value="1"/>
</dbReference>
<dbReference type="SUPFAM" id="SSF53098">
    <property type="entry name" value="Ribonuclease H-like"/>
    <property type="match status" value="1"/>
</dbReference>
<dbReference type="PROSITE" id="PS50879">
    <property type="entry name" value="RNASE_H_1"/>
    <property type="match status" value="1"/>
</dbReference>
<reference key="1">
    <citation type="submission" date="2006-06" db="EMBL/GenBank/DDBJ databases">
        <title>Complete sequence of Pseudoalteromonas atlantica T6c.</title>
        <authorList>
            <consortium name="US DOE Joint Genome Institute"/>
            <person name="Copeland A."/>
            <person name="Lucas S."/>
            <person name="Lapidus A."/>
            <person name="Barry K."/>
            <person name="Detter J.C."/>
            <person name="Glavina del Rio T."/>
            <person name="Hammon N."/>
            <person name="Israni S."/>
            <person name="Dalin E."/>
            <person name="Tice H."/>
            <person name="Pitluck S."/>
            <person name="Saunders E."/>
            <person name="Brettin T."/>
            <person name="Bruce D."/>
            <person name="Han C."/>
            <person name="Tapia R."/>
            <person name="Gilna P."/>
            <person name="Schmutz J."/>
            <person name="Larimer F."/>
            <person name="Land M."/>
            <person name="Hauser L."/>
            <person name="Kyrpides N."/>
            <person name="Kim E."/>
            <person name="Karls A.C."/>
            <person name="Bartlett D."/>
            <person name="Higgins B.P."/>
            <person name="Richardson P."/>
        </authorList>
    </citation>
    <scope>NUCLEOTIDE SEQUENCE [LARGE SCALE GENOMIC DNA]</scope>
    <source>
        <strain>T6c / ATCC BAA-1087</strain>
    </source>
</reference>
<keyword id="KW-0963">Cytoplasm</keyword>
<keyword id="KW-0255">Endonuclease</keyword>
<keyword id="KW-0378">Hydrolase</keyword>
<keyword id="KW-0460">Magnesium</keyword>
<keyword id="KW-0479">Metal-binding</keyword>
<keyword id="KW-0540">Nuclease</keyword>
<sequence length="153" mass="17256">MKHIEIYTDGSCLGNPGPGGYGAVLLFNQHSKELSQGFVHTTNNRMELLATIEALASLTETCKVDLTTDSQYVKNGINQWIKNWRKNGWRTSDKKPVKNVDLWKRLDEQVGRHDVKWHWVKGHSGHPMNERCDVLARDAASGKSLLPDEGFQG</sequence>
<evidence type="ECO:0000255" key="1">
    <source>
        <dbReference type="HAMAP-Rule" id="MF_00042"/>
    </source>
</evidence>
<evidence type="ECO:0000255" key="2">
    <source>
        <dbReference type="PROSITE-ProRule" id="PRU00408"/>
    </source>
</evidence>
<gene>
    <name evidence="1" type="primary">rnhA</name>
    <name type="ordered locus">Patl_2365</name>
</gene>
<feature type="chain" id="PRO_0000332653" description="Ribonuclease H">
    <location>
        <begin position="1"/>
        <end position="153"/>
    </location>
</feature>
<feature type="domain" description="RNase H type-1" evidence="2">
    <location>
        <begin position="1"/>
        <end position="141"/>
    </location>
</feature>
<feature type="binding site" evidence="1">
    <location>
        <position position="9"/>
    </location>
    <ligand>
        <name>Mg(2+)</name>
        <dbReference type="ChEBI" id="CHEBI:18420"/>
        <label>1</label>
    </ligand>
</feature>
<feature type="binding site" evidence="1">
    <location>
        <position position="9"/>
    </location>
    <ligand>
        <name>Mg(2+)</name>
        <dbReference type="ChEBI" id="CHEBI:18420"/>
        <label>2</label>
    </ligand>
</feature>
<feature type="binding site" evidence="1">
    <location>
        <position position="47"/>
    </location>
    <ligand>
        <name>Mg(2+)</name>
        <dbReference type="ChEBI" id="CHEBI:18420"/>
        <label>1</label>
    </ligand>
</feature>
<feature type="binding site" evidence="1">
    <location>
        <position position="69"/>
    </location>
    <ligand>
        <name>Mg(2+)</name>
        <dbReference type="ChEBI" id="CHEBI:18420"/>
        <label>1</label>
    </ligand>
</feature>
<feature type="binding site" evidence="1">
    <location>
        <position position="133"/>
    </location>
    <ligand>
        <name>Mg(2+)</name>
        <dbReference type="ChEBI" id="CHEBI:18420"/>
        <label>2</label>
    </ligand>
</feature>
<organism>
    <name type="scientific">Pseudoalteromonas atlantica (strain T6c / ATCC BAA-1087)</name>
    <dbReference type="NCBI Taxonomy" id="3042615"/>
    <lineage>
        <taxon>Bacteria</taxon>
        <taxon>Pseudomonadati</taxon>
        <taxon>Pseudomonadota</taxon>
        <taxon>Gammaproteobacteria</taxon>
        <taxon>Alteromonadales</taxon>
        <taxon>Alteromonadaceae</taxon>
        <taxon>Paraglaciecola</taxon>
    </lineage>
</organism>
<proteinExistence type="inferred from homology"/>
<accession>Q15TA7</accession>
<name>RNH_PSEA6</name>
<protein>
    <recommendedName>
        <fullName evidence="1">Ribonuclease H</fullName>
        <shortName evidence="1">RNase H</shortName>
        <ecNumber evidence="1">3.1.26.4</ecNumber>
    </recommendedName>
</protein>
<comment type="function">
    <text evidence="1">Endonuclease that specifically degrades the RNA of RNA-DNA hybrids.</text>
</comment>
<comment type="catalytic activity">
    <reaction evidence="1">
        <text>Endonucleolytic cleavage to 5'-phosphomonoester.</text>
        <dbReference type="EC" id="3.1.26.4"/>
    </reaction>
</comment>
<comment type="cofactor">
    <cofactor evidence="1">
        <name>Mg(2+)</name>
        <dbReference type="ChEBI" id="CHEBI:18420"/>
    </cofactor>
    <text evidence="1">Binds 1 Mg(2+) ion per subunit. May bind a second metal ion at a regulatory site, or after substrate binding.</text>
</comment>
<comment type="subunit">
    <text evidence="1">Monomer.</text>
</comment>
<comment type="subcellular location">
    <subcellularLocation>
        <location evidence="1">Cytoplasm</location>
    </subcellularLocation>
</comment>
<comment type="similarity">
    <text evidence="1">Belongs to the RNase H family.</text>
</comment>